<keyword id="KW-0456">Lyase</keyword>
<keyword id="KW-1185">Reference proteome</keyword>
<keyword id="KW-0783">Tetrahydrobiopterin biosynthesis</keyword>
<gene>
    <name type="primary">phhB</name>
    <name type="ordered locus">PP_4491</name>
</gene>
<accession>Q88EH2</accession>
<reference key="1">
    <citation type="journal article" date="2002" name="Environ. Microbiol.">
        <title>Complete genome sequence and comparative analysis of the metabolically versatile Pseudomonas putida KT2440.</title>
        <authorList>
            <person name="Nelson K.E."/>
            <person name="Weinel C."/>
            <person name="Paulsen I.T."/>
            <person name="Dodson R.J."/>
            <person name="Hilbert H."/>
            <person name="Martins dos Santos V.A.P."/>
            <person name="Fouts D.E."/>
            <person name="Gill S.R."/>
            <person name="Pop M."/>
            <person name="Holmes M."/>
            <person name="Brinkac L.M."/>
            <person name="Beanan M.J."/>
            <person name="DeBoy R.T."/>
            <person name="Daugherty S.C."/>
            <person name="Kolonay J.F."/>
            <person name="Madupu R."/>
            <person name="Nelson W.C."/>
            <person name="White O."/>
            <person name="Peterson J.D."/>
            <person name="Khouri H.M."/>
            <person name="Hance I."/>
            <person name="Chris Lee P."/>
            <person name="Holtzapple E.K."/>
            <person name="Scanlan D."/>
            <person name="Tran K."/>
            <person name="Moazzez A."/>
            <person name="Utterback T.R."/>
            <person name="Rizzo M."/>
            <person name="Lee K."/>
            <person name="Kosack D."/>
            <person name="Moestl D."/>
            <person name="Wedler H."/>
            <person name="Lauber J."/>
            <person name="Stjepandic D."/>
            <person name="Hoheisel J."/>
            <person name="Straetz M."/>
            <person name="Heim S."/>
            <person name="Kiewitz C."/>
            <person name="Eisen J.A."/>
            <person name="Timmis K.N."/>
            <person name="Duesterhoeft A."/>
            <person name="Tuemmler B."/>
            <person name="Fraser C.M."/>
        </authorList>
    </citation>
    <scope>NUCLEOTIDE SEQUENCE [LARGE SCALE GENOMIC DNA]</scope>
    <source>
        <strain>ATCC 47054 / DSM 6125 / CFBP 8728 / NCIMB 11950 / KT2440</strain>
    </source>
</reference>
<dbReference type="EC" id="4.2.1.96" evidence="2"/>
<dbReference type="EMBL" id="AE015451">
    <property type="protein sequence ID" value="AAN70066.1"/>
    <property type="molecule type" value="Genomic_DNA"/>
</dbReference>
<dbReference type="RefSeq" id="NP_746602.1">
    <property type="nucleotide sequence ID" value="NC_002947.4"/>
</dbReference>
<dbReference type="RefSeq" id="WP_003254532.1">
    <property type="nucleotide sequence ID" value="NZ_CP169744.1"/>
</dbReference>
<dbReference type="SMR" id="Q88EH2"/>
<dbReference type="STRING" id="160488.PP_4491"/>
<dbReference type="PaxDb" id="160488-PP_4491"/>
<dbReference type="KEGG" id="ppu:PP_4491"/>
<dbReference type="PATRIC" id="fig|160488.4.peg.4780"/>
<dbReference type="eggNOG" id="COG2154">
    <property type="taxonomic scope" value="Bacteria"/>
</dbReference>
<dbReference type="HOGENOM" id="CLU_081974_2_2_6"/>
<dbReference type="OrthoDB" id="5294615at2"/>
<dbReference type="PhylomeDB" id="Q88EH2"/>
<dbReference type="BioCyc" id="PPUT160488:G1G01-4793-MONOMER"/>
<dbReference type="Proteomes" id="UP000000556">
    <property type="component" value="Chromosome"/>
</dbReference>
<dbReference type="GO" id="GO:0008124">
    <property type="term" value="F:4-alpha-hydroxytetrahydrobiopterin dehydratase activity"/>
    <property type="evidence" value="ECO:0007669"/>
    <property type="project" value="UniProtKB-UniRule"/>
</dbReference>
<dbReference type="GO" id="GO:0006729">
    <property type="term" value="P:tetrahydrobiopterin biosynthetic process"/>
    <property type="evidence" value="ECO:0007669"/>
    <property type="project" value="UniProtKB-KW"/>
</dbReference>
<dbReference type="CDD" id="cd00913">
    <property type="entry name" value="PCD_DCoH_subfamily_a"/>
    <property type="match status" value="1"/>
</dbReference>
<dbReference type="Gene3D" id="3.30.1360.20">
    <property type="entry name" value="Transcriptional coactivator/pterin dehydratase"/>
    <property type="match status" value="1"/>
</dbReference>
<dbReference type="HAMAP" id="MF_00434">
    <property type="entry name" value="Pterin_4_alpha"/>
    <property type="match status" value="1"/>
</dbReference>
<dbReference type="InterPro" id="IPR036428">
    <property type="entry name" value="PCD_sf"/>
</dbReference>
<dbReference type="InterPro" id="IPR050376">
    <property type="entry name" value="Pterin-4-alpha-carb_dehyd"/>
</dbReference>
<dbReference type="InterPro" id="IPR001533">
    <property type="entry name" value="Pterin_deHydtase"/>
</dbReference>
<dbReference type="NCBIfam" id="NF002016">
    <property type="entry name" value="PRK00823.1-1"/>
    <property type="match status" value="1"/>
</dbReference>
<dbReference type="PANTHER" id="PTHR42805">
    <property type="entry name" value="PTERIN-4-ALPHA-CARBINOLAMINE DEHYDRATASE-RELATED"/>
    <property type="match status" value="1"/>
</dbReference>
<dbReference type="PANTHER" id="PTHR42805:SF1">
    <property type="entry name" value="PTERIN-4-ALPHA-CARBINOLAMINE DEHYDRATASE-RELATED"/>
    <property type="match status" value="1"/>
</dbReference>
<dbReference type="Pfam" id="PF01329">
    <property type="entry name" value="Pterin_4a"/>
    <property type="match status" value="1"/>
</dbReference>
<dbReference type="SUPFAM" id="SSF55248">
    <property type="entry name" value="PCD-like"/>
    <property type="match status" value="1"/>
</dbReference>
<sequence>MNALNQAHCEACRADAPKVTDEELAELIREIPDWNIEVRDGHMELERVFLFKNFKHALAFTNAVGEIAEAEGHHPGLLTEWGKVTVTWWSHSIKGLHRNDFIMCARTDKVAETAEGRK</sequence>
<comment type="function">
    <text evidence="1">Involved in tetrahydrobiopterin biosynthesis. Seems to both prevent the formation of 7-pterins and accelerate the formation of quinonoid-BH2. May also have a positive regulatory role in the expression of phhA (By similarity).</text>
</comment>
<comment type="catalytic activity">
    <reaction evidence="2">
        <text>(4aS,6R)-4a-hydroxy-L-erythro-5,6,7,8-tetrahydrobiopterin = (6R)-L-erythro-6,7-dihydrobiopterin + H2O</text>
        <dbReference type="Rhea" id="RHEA:11920"/>
        <dbReference type="ChEBI" id="CHEBI:15377"/>
        <dbReference type="ChEBI" id="CHEBI:15642"/>
        <dbReference type="ChEBI" id="CHEBI:43120"/>
        <dbReference type="EC" id="4.2.1.96"/>
    </reaction>
</comment>
<comment type="similarity">
    <text evidence="2">Belongs to the pterin-4-alpha-carbinolamine dehydratase family.</text>
</comment>
<proteinExistence type="inferred from homology"/>
<name>PHS_PSEPK</name>
<feature type="chain" id="PRO_0000063066" description="Pterin-4-alpha-carbinolamine dehydratase">
    <location>
        <begin position="1"/>
        <end position="118"/>
    </location>
</feature>
<protein>
    <recommendedName>
        <fullName>Pterin-4-alpha-carbinolamine dehydratase</fullName>
        <shortName evidence="2">PHS</shortName>
        <ecNumber evidence="2">4.2.1.96</ecNumber>
    </recommendedName>
    <alternativeName>
        <fullName evidence="2">4-alpha-hydroxy-tetrahydropterin dehydratase</fullName>
    </alternativeName>
    <alternativeName>
        <fullName evidence="2">Pterin carbinolamine dehydratase</fullName>
        <shortName evidence="2">PCD</shortName>
    </alternativeName>
</protein>
<evidence type="ECO:0000250" key="1"/>
<evidence type="ECO:0000255" key="2">
    <source>
        <dbReference type="HAMAP-Rule" id="MF_00434"/>
    </source>
</evidence>
<organism>
    <name type="scientific">Pseudomonas putida (strain ATCC 47054 / DSM 6125 / CFBP 8728 / NCIMB 11950 / KT2440)</name>
    <dbReference type="NCBI Taxonomy" id="160488"/>
    <lineage>
        <taxon>Bacteria</taxon>
        <taxon>Pseudomonadati</taxon>
        <taxon>Pseudomonadota</taxon>
        <taxon>Gammaproteobacteria</taxon>
        <taxon>Pseudomonadales</taxon>
        <taxon>Pseudomonadaceae</taxon>
        <taxon>Pseudomonas</taxon>
    </lineage>
</organism>